<comment type="function">
    <text evidence="1">Required for the insertion and/or proper folding and/or complex formation of integral membrane proteins into the membrane. Involved in integration of membrane proteins that insert both dependently and independently of the Sec translocase complex, as well as at least some lipoproteins.</text>
</comment>
<comment type="subcellular location">
    <subcellularLocation>
        <location evidence="1">Cell membrane</location>
        <topology evidence="1">Multi-pass membrane protein</topology>
    </subcellularLocation>
</comment>
<comment type="similarity">
    <text evidence="1">Belongs to the OXA1/ALB3/YidC family. Type 2 subfamily.</text>
</comment>
<name>YIDC_STAAW</name>
<keyword id="KW-1003">Cell membrane</keyword>
<keyword id="KW-0143">Chaperone</keyword>
<keyword id="KW-0449">Lipoprotein</keyword>
<keyword id="KW-0472">Membrane</keyword>
<keyword id="KW-0564">Palmitate</keyword>
<keyword id="KW-0653">Protein transport</keyword>
<keyword id="KW-0732">Signal</keyword>
<keyword id="KW-0812">Transmembrane</keyword>
<keyword id="KW-1133">Transmembrane helix</keyword>
<keyword id="KW-0813">Transport</keyword>
<reference key="1">
    <citation type="journal article" date="2002" name="Lancet">
        <title>Genome and virulence determinants of high virulence community-acquired MRSA.</title>
        <authorList>
            <person name="Baba T."/>
            <person name="Takeuchi F."/>
            <person name="Kuroda M."/>
            <person name="Yuzawa H."/>
            <person name="Aoki K."/>
            <person name="Oguchi A."/>
            <person name="Nagai Y."/>
            <person name="Iwama N."/>
            <person name="Asano K."/>
            <person name="Naimi T."/>
            <person name="Kuroda H."/>
            <person name="Cui L."/>
            <person name="Yamamoto K."/>
            <person name="Hiramatsu K."/>
        </authorList>
    </citation>
    <scope>NUCLEOTIDE SEQUENCE [LARGE SCALE GENOMIC DNA]</scope>
    <source>
        <strain>MW2</strain>
    </source>
</reference>
<feature type="signal peptide" evidence="1">
    <location>
        <begin position="1"/>
        <end position="19"/>
    </location>
</feature>
<feature type="chain" id="PRO_0000020396" description="Membrane protein insertase YidC">
    <location>
        <begin position="20"/>
        <end position="290"/>
    </location>
</feature>
<feature type="transmembrane region" description="Helical" evidence="1">
    <location>
        <begin position="56"/>
        <end position="76"/>
    </location>
</feature>
<feature type="transmembrane region" description="Helical" evidence="1">
    <location>
        <begin position="134"/>
        <end position="154"/>
    </location>
</feature>
<feature type="transmembrane region" description="Helical" evidence="1">
    <location>
        <begin position="176"/>
        <end position="196"/>
    </location>
</feature>
<feature type="transmembrane region" description="Helical" evidence="1">
    <location>
        <begin position="207"/>
        <end position="224"/>
    </location>
</feature>
<feature type="transmembrane region" description="Helical" evidence="1">
    <location>
        <begin position="229"/>
        <end position="251"/>
    </location>
</feature>
<feature type="region of interest" description="Disordered" evidence="2">
    <location>
        <begin position="270"/>
        <end position="290"/>
    </location>
</feature>
<feature type="lipid moiety-binding region" description="N-palmitoyl cysteine" evidence="1">
    <location>
        <position position="20"/>
    </location>
</feature>
<feature type="lipid moiety-binding region" description="S-diacylglycerol cysteine" evidence="1">
    <location>
        <position position="20"/>
    </location>
</feature>
<sequence>MKKKALLPLFLGIMVFLAGCDYSKPEKRSGFFYNTFVDPMKNVLDWLGNNLLNDNYGLAIIILVLVIRIILLPFMLSNYKNSHMMRQKMKVAKPEVEKIQEKVKRARTQEEKMAANQELMQVYKKYDMNPIKSMLGCLPMLIQLPIIMGLYFVLKDQLVDGLFKYPHFLWFDLGRPDIWITIIAGVLYFIQAYVSSKTMPDEQRQMGYMMMVISPIMIIWISLSSASALGLYWSVSAAFLVVQTHFANIYYEKVAKKEVQPFIEAYEREHNGGSNKKGKNTQVVSKKKKK</sequence>
<dbReference type="EMBL" id="BA000033">
    <property type="protein sequence ID" value="BAB95878.1"/>
    <property type="molecule type" value="Genomic_DNA"/>
</dbReference>
<dbReference type="RefSeq" id="WP_000725802.1">
    <property type="nucleotide sequence ID" value="NC_003923.1"/>
</dbReference>
<dbReference type="SMR" id="P65630"/>
<dbReference type="KEGG" id="sam:MW2013"/>
<dbReference type="HOGENOM" id="CLU_036138_5_2_9"/>
<dbReference type="GO" id="GO:0005886">
    <property type="term" value="C:plasma membrane"/>
    <property type="evidence" value="ECO:0007669"/>
    <property type="project" value="UniProtKB-SubCell"/>
</dbReference>
<dbReference type="GO" id="GO:0032977">
    <property type="term" value="F:membrane insertase activity"/>
    <property type="evidence" value="ECO:0007669"/>
    <property type="project" value="InterPro"/>
</dbReference>
<dbReference type="GO" id="GO:0051205">
    <property type="term" value="P:protein insertion into membrane"/>
    <property type="evidence" value="ECO:0007669"/>
    <property type="project" value="TreeGrafter"/>
</dbReference>
<dbReference type="GO" id="GO:0015031">
    <property type="term" value="P:protein transport"/>
    <property type="evidence" value="ECO:0007669"/>
    <property type="project" value="UniProtKB-KW"/>
</dbReference>
<dbReference type="CDD" id="cd20070">
    <property type="entry name" value="5TM_YidC_Alb3"/>
    <property type="match status" value="1"/>
</dbReference>
<dbReference type="HAMAP" id="MF_01811">
    <property type="entry name" value="YidC_type2"/>
    <property type="match status" value="1"/>
</dbReference>
<dbReference type="InterPro" id="IPR001708">
    <property type="entry name" value="YidC/ALB3/OXA1/COX18"/>
</dbReference>
<dbReference type="InterPro" id="IPR028055">
    <property type="entry name" value="YidC/Oxa/ALB_C"/>
</dbReference>
<dbReference type="InterPro" id="IPR023060">
    <property type="entry name" value="YidC/YidC1/YidC2_Firmicutes"/>
</dbReference>
<dbReference type="InterPro" id="IPR047196">
    <property type="entry name" value="YidC_ALB_C"/>
</dbReference>
<dbReference type="NCBIfam" id="TIGR03592">
    <property type="entry name" value="yidC_oxa1_cterm"/>
    <property type="match status" value="1"/>
</dbReference>
<dbReference type="PANTHER" id="PTHR12428:SF65">
    <property type="entry name" value="CYTOCHROME C OXIDASE ASSEMBLY PROTEIN COX18, MITOCHONDRIAL"/>
    <property type="match status" value="1"/>
</dbReference>
<dbReference type="PANTHER" id="PTHR12428">
    <property type="entry name" value="OXA1"/>
    <property type="match status" value="1"/>
</dbReference>
<dbReference type="Pfam" id="PF02096">
    <property type="entry name" value="60KD_IMP"/>
    <property type="match status" value="1"/>
</dbReference>
<dbReference type="PRINTS" id="PR00701">
    <property type="entry name" value="60KDINNERMP"/>
</dbReference>
<dbReference type="PROSITE" id="PS51257">
    <property type="entry name" value="PROKAR_LIPOPROTEIN"/>
    <property type="match status" value="1"/>
</dbReference>
<proteinExistence type="inferred from homology"/>
<gene>
    <name evidence="1" type="primary">yidC</name>
    <name type="ordered locus">MW2013</name>
</gene>
<organism>
    <name type="scientific">Staphylococcus aureus (strain MW2)</name>
    <dbReference type="NCBI Taxonomy" id="196620"/>
    <lineage>
        <taxon>Bacteria</taxon>
        <taxon>Bacillati</taxon>
        <taxon>Bacillota</taxon>
        <taxon>Bacilli</taxon>
        <taxon>Bacillales</taxon>
        <taxon>Staphylococcaceae</taxon>
        <taxon>Staphylococcus</taxon>
    </lineage>
</organism>
<evidence type="ECO:0000255" key="1">
    <source>
        <dbReference type="HAMAP-Rule" id="MF_01811"/>
    </source>
</evidence>
<evidence type="ECO:0000256" key="2">
    <source>
        <dbReference type="SAM" id="MobiDB-lite"/>
    </source>
</evidence>
<accession>P65630</accession>
<accession>Q99SG7</accession>
<protein>
    <recommendedName>
        <fullName evidence="1">Membrane protein insertase YidC</fullName>
    </recommendedName>
    <alternativeName>
        <fullName evidence="1">Foldase YidC</fullName>
    </alternativeName>
    <alternativeName>
        <fullName evidence="1">Membrane integrase YidC</fullName>
    </alternativeName>
    <alternativeName>
        <fullName evidence="1">Membrane protein YidC</fullName>
    </alternativeName>
</protein>